<comment type="function">
    <text evidence="3">3-hydroxyl-[acyl-carrier-protein] (3-hydroxyl-ACP) dehydratase required for mitochondrial fatty acid synthesis (mtFAS) (PubMed:35640121). Essential for photorespiration, tomato morphogenesis and plant development, probably by influencing mitochondrial membrane lipid composition and other lipid metabolic pathways, and by contributing to energy supply and reactive oxygen species (ROS) homeostasis (PubMed:35640121).</text>
</comment>
<comment type="catalytic activity">
    <reaction evidence="6">
        <text>a (3R)-hydroxyacyl-[ACP] = a (2E)-enoyl-[ACP] + H2O</text>
        <dbReference type="Rhea" id="RHEA:13097"/>
        <dbReference type="Rhea" id="RHEA-COMP:9925"/>
        <dbReference type="Rhea" id="RHEA-COMP:9945"/>
        <dbReference type="ChEBI" id="CHEBI:15377"/>
        <dbReference type="ChEBI" id="CHEBI:78784"/>
        <dbReference type="ChEBI" id="CHEBI:78827"/>
        <dbReference type="EC" id="4.2.1.59"/>
    </reaction>
    <physiologicalReaction direction="left-to-right" evidence="6">
        <dbReference type="Rhea" id="RHEA:13098"/>
    </physiologicalReaction>
</comment>
<comment type="pathway">
    <text evidence="3">Lipid metabolism; fatty acid biosynthesis.</text>
</comment>
<comment type="subunit">
    <text evidence="1">Homodimer.</text>
</comment>
<comment type="subcellular location">
    <subcellularLocation>
        <location evidence="3">Mitochondrion</location>
    </subcellularLocation>
</comment>
<reference key="1">
    <citation type="journal article" date="2012" name="Nature">
        <title>The tomato genome sequence provides insights into fleshy fruit evolution.</title>
        <authorList>
            <consortium name="Tomato Genome Consortium"/>
        </authorList>
    </citation>
    <scope>NUCLEOTIDE SEQUENCE [LARGE SCALE GENOMIC DNA]</scope>
    <source>
        <strain>cv. Heinz 1706</strain>
    </source>
</reference>
<reference key="2">
    <citation type="journal article" date="2022" name="Plant Physiol.">
        <title>Critical roles of mitochondrial fatty acid synthesis in tomato development and environmental response.</title>
        <authorList>
            <person name="Zhou Y."/>
            <person name="Yu H."/>
            <person name="Tang Y."/>
            <person name="Chen R."/>
            <person name="Luo J."/>
            <person name="Shi C."/>
            <person name="Tang S."/>
            <person name="Li X."/>
            <person name="Shen X."/>
            <person name="Chen R."/>
            <person name="Zhang Y."/>
            <person name="Lu Y."/>
            <person name="Ye Z."/>
            <person name="Guo L."/>
            <person name="Ouyang B."/>
        </authorList>
    </citation>
    <scope>FUNCTION</scope>
    <scope>MUTAGENESIS OF CYS-133</scope>
    <scope>CATALYTIC ACTIVITY</scope>
    <scope>PATHWAY</scope>
    <scope>SUBCELLULAR LOCATION</scope>
    <source>
        <strain>cv. Ailsa Craig</strain>
    </source>
</reference>
<proteinExistence type="evidence at protein level"/>
<organism>
    <name type="scientific">Solanum lycopersicum</name>
    <name type="common">Tomato</name>
    <name type="synonym">Lycopersicon esculentum</name>
    <dbReference type="NCBI Taxonomy" id="4081"/>
    <lineage>
        <taxon>Eukaryota</taxon>
        <taxon>Viridiplantae</taxon>
        <taxon>Streptophyta</taxon>
        <taxon>Embryophyta</taxon>
        <taxon>Tracheophyta</taxon>
        <taxon>Spermatophyta</taxon>
        <taxon>Magnoliopsida</taxon>
        <taxon>eudicotyledons</taxon>
        <taxon>Gunneridae</taxon>
        <taxon>Pentapetalae</taxon>
        <taxon>asterids</taxon>
        <taxon>lamiids</taxon>
        <taxon>Solanales</taxon>
        <taxon>Solanaceae</taxon>
        <taxon>Solanoideae</taxon>
        <taxon>Solaneae</taxon>
        <taxon>Solanum</taxon>
        <taxon>Solanum subgen. Lycopersicon</taxon>
    </lineage>
</organism>
<sequence>MLMKRLFSSSHVFSSSSASSNLLKIGSVLKQARTFADDDVLGYSKLTHDANPLHFDAECAKNAGFTDCLVPGMLVASLFPRIIAAHFPGAIYVSQTLHFKLPVYIGDEIIAEVQAVSIRQIKNKYIAKLSTKCIKRDGPLVIDGEATAMLPSLVMEPPNLEITSS</sequence>
<protein>
    <recommendedName>
        <fullName evidence="4">3-hydroxyacyl-[acyl-carrier-protein] dehydratase FERN, mitochondrial</fullName>
        <shortName evidence="4">3-hydroxyl-ACP dehydratase FERN</shortName>
        <ecNumber evidence="6">4.2.1.59</ecNumber>
    </recommendedName>
    <alternativeName>
        <fullName evidence="4">Protein FERN-LIKE</fullName>
        <shortName evidence="4">SlFERN</shortName>
    </alternativeName>
</protein>
<evidence type="ECO:0000250" key="1">
    <source>
        <dbReference type="UniProtKB" id="O32472"/>
    </source>
</evidence>
<evidence type="ECO:0000255" key="2"/>
<evidence type="ECO:0000269" key="3">
    <source>
    </source>
</evidence>
<evidence type="ECO:0000303" key="4">
    <source>
    </source>
</evidence>
<evidence type="ECO:0000305" key="5"/>
<evidence type="ECO:0000305" key="6">
    <source>
    </source>
</evidence>
<name>FERN_SOLLC</name>
<keyword id="KW-0276">Fatty acid metabolism</keyword>
<keyword id="KW-0443">Lipid metabolism</keyword>
<keyword id="KW-0456">Lyase</keyword>
<keyword id="KW-0496">Mitochondrion</keyword>
<keyword id="KW-1185">Reference proteome</keyword>
<keyword id="KW-0809">Transit peptide</keyword>
<feature type="transit peptide" description="Mitochondrion" evidence="2">
    <location>
        <begin position="1"/>
        <end position="35"/>
    </location>
</feature>
<feature type="chain" id="PRO_0000456815" description="3-hydroxyacyl-[acyl-carrier-protein] dehydratase FERN, mitochondrial" evidence="2">
    <location>
        <begin position="36"/>
        <end position="165"/>
    </location>
</feature>
<feature type="domain" description="MaoC-like" evidence="2">
    <location>
        <begin position="36"/>
        <end position="124"/>
    </location>
</feature>
<feature type="mutagenesis site" description="In fern-like; pleiotropic phenotypes associated with lower mitochondrial fatty acid synthesis (mtFAS) and reduced chlorophyll content such as dwarfism, yellowing, curly leaves, and increased axillary buds. New leaves looks like a spiral fern. Reduced accumulation (at protein level)." evidence="3">
    <original>C</original>
    <variation>Y</variation>
    <location>
        <position position="133"/>
    </location>
</feature>
<gene>
    <name evidence="4" type="primary">FERN</name>
    <name evidence="5" type="ordered locus">Solyc06g075000</name>
</gene>
<dbReference type="EC" id="4.2.1.59" evidence="6"/>
<dbReference type="RefSeq" id="XP_010322407.1">
    <property type="nucleotide sequence ID" value="XM_010324105.2"/>
</dbReference>
<dbReference type="SMR" id="A0A3Q7HWE4"/>
<dbReference type="FunCoup" id="A0A3Q7HWE4">
    <property type="interactions" value="170"/>
</dbReference>
<dbReference type="STRING" id="4081.A0A3Q7HWE4"/>
<dbReference type="PaxDb" id="4081-Solyc06g075000.2.1"/>
<dbReference type="EnsemblPlants" id="Solyc06g075000.3.1">
    <property type="protein sequence ID" value="Solyc06g075000.3.1"/>
    <property type="gene ID" value="Solyc06g075000.3"/>
</dbReference>
<dbReference type="GeneID" id="101265549"/>
<dbReference type="Gramene" id="Solyc06g075000.3.1">
    <property type="protein sequence ID" value="Solyc06g075000.3.1"/>
    <property type="gene ID" value="Solyc06g075000.3"/>
</dbReference>
<dbReference type="InParanoid" id="A0A3Q7HWE4"/>
<dbReference type="OMA" id="GCVFLHQ"/>
<dbReference type="OrthoDB" id="3592703at2759"/>
<dbReference type="UniPathway" id="UPA00094"/>
<dbReference type="Proteomes" id="UP000004994">
    <property type="component" value="Chromosome 6"/>
</dbReference>
<dbReference type="GO" id="GO:0005739">
    <property type="term" value="C:mitochondrion"/>
    <property type="evidence" value="ECO:0000314"/>
    <property type="project" value="UniProtKB"/>
</dbReference>
<dbReference type="GO" id="GO:0019171">
    <property type="term" value="F:(3R)-hydroxyacyl-[acyl-carrier-protein] dehydratase activity"/>
    <property type="evidence" value="ECO:0000315"/>
    <property type="project" value="UniProtKB"/>
</dbReference>
<dbReference type="GO" id="GO:0004312">
    <property type="term" value="F:fatty acid synthase activity"/>
    <property type="evidence" value="ECO:0000315"/>
    <property type="project" value="UniProtKB"/>
</dbReference>
<dbReference type="GO" id="GO:0006633">
    <property type="term" value="P:fatty acid biosynthetic process"/>
    <property type="evidence" value="ECO:0000315"/>
    <property type="project" value="UniProtKB"/>
</dbReference>
<dbReference type="GO" id="GO:0009853">
    <property type="term" value="P:photorespiration"/>
    <property type="evidence" value="ECO:0007669"/>
    <property type="project" value="EnsemblPlants"/>
</dbReference>
<dbReference type="GO" id="GO:0010027">
    <property type="term" value="P:thylakoid membrane organization"/>
    <property type="evidence" value="ECO:0007669"/>
    <property type="project" value="EnsemblPlants"/>
</dbReference>
<dbReference type="CDD" id="cd03449">
    <property type="entry name" value="R_hydratase"/>
    <property type="match status" value="1"/>
</dbReference>
<dbReference type="Gene3D" id="3.10.129.10">
    <property type="entry name" value="Hotdog Thioesterase"/>
    <property type="match status" value="1"/>
</dbReference>
<dbReference type="InterPro" id="IPR029069">
    <property type="entry name" value="HotDog_dom_sf"/>
</dbReference>
<dbReference type="InterPro" id="IPR002539">
    <property type="entry name" value="MaoC-like_dom"/>
</dbReference>
<dbReference type="InterPro" id="IPR050965">
    <property type="entry name" value="UPF0336/Enoyl-CoA_hydratase"/>
</dbReference>
<dbReference type="PANTHER" id="PTHR43437:SF3">
    <property type="entry name" value="HYDROXYACYL-THIOESTER DEHYDRATASE TYPE 2, MITOCHONDRIAL"/>
    <property type="match status" value="1"/>
</dbReference>
<dbReference type="PANTHER" id="PTHR43437">
    <property type="entry name" value="HYDROXYACYL-THIOESTER DEHYDRATASE TYPE 2, MITOCHONDRIAL-RELATED"/>
    <property type="match status" value="1"/>
</dbReference>
<dbReference type="Pfam" id="PF01575">
    <property type="entry name" value="MaoC_dehydratas"/>
    <property type="match status" value="1"/>
</dbReference>
<dbReference type="SUPFAM" id="SSF54637">
    <property type="entry name" value="Thioesterase/thiol ester dehydrase-isomerase"/>
    <property type="match status" value="1"/>
</dbReference>
<accession>A0A3Q7HWE4</accession>